<gene>
    <name evidence="8" type="ORF">OsI_16797</name>
</gene>
<sequence>MAARCWVWGFVVALLAVAAAADGEEEEGKWEPLIRMPTEEGDDAEAAAPAPAPAAADYGGTRWAVLVAGSSGYGNYRHQADVCHACQILQKGGVKEENIVVFMYDDIAHNILNPRPGTIINHPKGGDVYAGVPKDYTGHQVTTENFFAVLLGNKTAVTGGSGKVIDSKPEDHIFIYYSDHGGPGVLGMPNLPYLYAGDFIKVLQKKHASNSYSKMVIYVEACESGSIFEGLMPENLNIYVTTASNAVENSWGTYCPGEEPSPPPEYITCLGDMYSVAWMEDSETHNLKKETIEDQYELVKKRTSNANKLNEGSHVMEYGDKTFKDEKLFLYQGFNPANGNITNELIWPVPKATVNQRDADLLFMWKRYEQLNGVSEDKLRALREIEDTIAHRKHLDSSIDFIGKLVFGFENGPLALEAARSSGQPLVDNWDCLKKMVRIFESQCGSLTQYGMKYMRAFANICNNGVSEAKMMEASINACGRYNSARWSPMTEGGHSA</sequence>
<proteinExistence type="inferred from homology"/>
<protein>
    <recommendedName>
        <fullName evidence="7">Vacuolar-processing enzyme beta-isozyme 1</fullName>
        <shortName evidence="7">Beta-VPE 1</shortName>
        <shortName evidence="7">OsVPE1</shortName>
        <ecNumber evidence="4">3.4.22.34</ecNumber>
    </recommendedName>
    <alternativeName>
        <fullName evidence="7">Asparaginyl endopeptidase VPE1</fullName>
    </alternativeName>
</protein>
<name>VPE1_ORYSI</name>
<feature type="signal peptide" evidence="5">
    <location>
        <begin position="1"/>
        <end position="23"/>
    </location>
</feature>
<feature type="chain" id="PRO_0000431975" description="Vacuolar-processing enzyme beta-isozyme 1" evidence="5">
    <location>
        <begin position="24"/>
        <end position="497"/>
    </location>
</feature>
<feature type="active site" evidence="1">
    <location>
        <position position="180"/>
    </location>
</feature>
<feature type="active site" description="Nucleophile" evidence="1">
    <location>
        <position position="222"/>
    </location>
</feature>
<feature type="site" description="Required for post-translational maturation and enzyme activity" evidence="4">
    <location>
        <position position="269"/>
    </location>
</feature>
<feature type="glycosylation site" description="N-linked (GlcNAc...) asparagine" evidence="6">
    <location>
        <position position="153"/>
    </location>
</feature>
<feature type="glycosylation site" description="N-linked (GlcNAc...) asparagine" evidence="6">
    <location>
        <position position="340"/>
    </location>
</feature>
<feature type="disulfide bond" evidence="3">
    <location>
        <begin position="255"/>
        <end position="269"/>
    </location>
</feature>
<feature type="disulfide bond" evidence="3">
    <location>
        <begin position="432"/>
        <end position="462"/>
    </location>
</feature>
<feature type="disulfide bond" evidence="3">
    <location>
        <begin position="444"/>
        <end position="479"/>
    </location>
</feature>
<comment type="function">
    <text evidence="2 4">Asparagine-specific endopeptidase that may be involved in processing of proteins targeted to vacuoles (By similarity). Cysteine protease required for post-translational proteolysis of seed storage proteins in the protein storage vacuole (PSV) of developing seeds, by processing of proglutelin precursor to mature glutelin subunits, thus contributing to the formation of protein crystalline structures in PSV (By similarity).</text>
</comment>
<comment type="catalytic activity">
    <reaction evidence="4">
        <text>Hydrolysis of proteins and small molecule substrates at -Asn-|-Xaa- bonds.</text>
        <dbReference type="EC" id="3.4.22.34"/>
    </reaction>
</comment>
<comment type="subcellular location">
    <subcellularLocation>
        <location evidence="4">Protein storage vacuole</location>
    </subcellularLocation>
</comment>
<comment type="PTM">
    <text evidence="4">Auto-catalytic activation.</text>
</comment>
<comment type="similarity">
    <text evidence="7">Belongs to the peptidase C13 family.</text>
</comment>
<reference key="1">
    <citation type="journal article" date="2005" name="PLoS Biol.">
        <title>The genomes of Oryza sativa: a history of duplications.</title>
        <authorList>
            <person name="Yu J."/>
            <person name="Wang J."/>
            <person name="Lin W."/>
            <person name="Li S."/>
            <person name="Li H."/>
            <person name="Zhou J."/>
            <person name="Ni P."/>
            <person name="Dong W."/>
            <person name="Hu S."/>
            <person name="Zeng C."/>
            <person name="Zhang J."/>
            <person name="Zhang Y."/>
            <person name="Li R."/>
            <person name="Xu Z."/>
            <person name="Li S."/>
            <person name="Li X."/>
            <person name="Zheng H."/>
            <person name="Cong L."/>
            <person name="Lin L."/>
            <person name="Yin J."/>
            <person name="Geng J."/>
            <person name="Li G."/>
            <person name="Shi J."/>
            <person name="Liu J."/>
            <person name="Lv H."/>
            <person name="Li J."/>
            <person name="Wang J."/>
            <person name="Deng Y."/>
            <person name="Ran L."/>
            <person name="Shi X."/>
            <person name="Wang X."/>
            <person name="Wu Q."/>
            <person name="Li C."/>
            <person name="Ren X."/>
            <person name="Wang J."/>
            <person name="Wang X."/>
            <person name="Li D."/>
            <person name="Liu D."/>
            <person name="Zhang X."/>
            <person name="Ji Z."/>
            <person name="Zhao W."/>
            <person name="Sun Y."/>
            <person name="Zhang Z."/>
            <person name="Bao J."/>
            <person name="Han Y."/>
            <person name="Dong L."/>
            <person name="Ji J."/>
            <person name="Chen P."/>
            <person name="Wu S."/>
            <person name="Liu J."/>
            <person name="Xiao Y."/>
            <person name="Bu D."/>
            <person name="Tan J."/>
            <person name="Yang L."/>
            <person name="Ye C."/>
            <person name="Zhang J."/>
            <person name="Xu J."/>
            <person name="Zhou Y."/>
            <person name="Yu Y."/>
            <person name="Zhang B."/>
            <person name="Zhuang S."/>
            <person name="Wei H."/>
            <person name="Liu B."/>
            <person name="Lei M."/>
            <person name="Yu H."/>
            <person name="Li Y."/>
            <person name="Xu H."/>
            <person name="Wei S."/>
            <person name="He X."/>
            <person name="Fang L."/>
            <person name="Zhang Z."/>
            <person name="Zhang Y."/>
            <person name="Huang X."/>
            <person name="Su Z."/>
            <person name="Tong W."/>
            <person name="Li J."/>
            <person name="Tong Z."/>
            <person name="Li S."/>
            <person name="Ye J."/>
            <person name="Wang L."/>
            <person name="Fang L."/>
            <person name="Lei T."/>
            <person name="Chen C.-S."/>
            <person name="Chen H.-C."/>
            <person name="Xu Z."/>
            <person name="Li H."/>
            <person name="Huang H."/>
            <person name="Zhang F."/>
            <person name="Xu H."/>
            <person name="Li N."/>
            <person name="Zhao C."/>
            <person name="Li S."/>
            <person name="Dong L."/>
            <person name="Huang Y."/>
            <person name="Li L."/>
            <person name="Xi Y."/>
            <person name="Qi Q."/>
            <person name="Li W."/>
            <person name="Zhang B."/>
            <person name="Hu W."/>
            <person name="Zhang Y."/>
            <person name="Tian X."/>
            <person name="Jiao Y."/>
            <person name="Liang X."/>
            <person name="Jin J."/>
            <person name="Gao L."/>
            <person name="Zheng W."/>
            <person name="Hao B."/>
            <person name="Liu S.-M."/>
            <person name="Wang W."/>
            <person name="Yuan L."/>
            <person name="Cao M."/>
            <person name="McDermott J."/>
            <person name="Samudrala R."/>
            <person name="Wang J."/>
            <person name="Wong G.K.-S."/>
            <person name="Yang H."/>
        </authorList>
    </citation>
    <scope>NUCLEOTIDE SEQUENCE [LARGE SCALE GENOMIC DNA]</scope>
    <source>
        <strain>cv. 93-11</strain>
    </source>
</reference>
<keyword id="KW-1015">Disulfide bond</keyword>
<keyword id="KW-0325">Glycoprotein</keyword>
<keyword id="KW-0378">Hydrolase</keyword>
<keyword id="KW-0645">Protease</keyword>
<keyword id="KW-1185">Reference proteome</keyword>
<keyword id="KW-0732">Signal</keyword>
<keyword id="KW-0788">Thiol protease</keyword>
<keyword id="KW-0926">Vacuole</keyword>
<dbReference type="EC" id="3.4.22.34" evidence="4"/>
<dbReference type="EMBL" id="CM000129">
    <property type="protein sequence ID" value="EEC77714.1"/>
    <property type="molecule type" value="Genomic_DNA"/>
</dbReference>
<dbReference type="SMR" id="B8ASK4"/>
<dbReference type="STRING" id="39946.B8ASK4"/>
<dbReference type="MEROPS" id="C13.001"/>
<dbReference type="EnsemblPlants" id="BGIOSGA014644-TA">
    <property type="protein sequence ID" value="BGIOSGA014644-PA"/>
    <property type="gene ID" value="BGIOSGA014644"/>
</dbReference>
<dbReference type="EnsemblPlants" id="OsKYG_04g0020870.01">
    <property type="protein sequence ID" value="OsKYG_04g0020870.01"/>
    <property type="gene ID" value="OsKYG_04g0020870"/>
</dbReference>
<dbReference type="EnsemblPlants" id="OsLiXu_04g0021360.01">
    <property type="protein sequence ID" value="OsLiXu_04g0021360.01"/>
    <property type="gene ID" value="OsLiXu_04g0021360"/>
</dbReference>
<dbReference type="Gramene" id="BGIOSGA014644-TA">
    <property type="protein sequence ID" value="BGIOSGA014644-PA"/>
    <property type="gene ID" value="BGIOSGA014644"/>
</dbReference>
<dbReference type="Gramene" id="OsKYG_04g0020870.01">
    <property type="protein sequence ID" value="OsKYG_04g0020870.01"/>
    <property type="gene ID" value="OsKYG_04g0020870"/>
</dbReference>
<dbReference type="Gramene" id="OsLiXu_04g0021360.01">
    <property type="protein sequence ID" value="OsLiXu_04g0021360.01"/>
    <property type="gene ID" value="OsLiXu_04g0021360"/>
</dbReference>
<dbReference type="HOGENOM" id="CLU_024160_0_0_1"/>
<dbReference type="OMA" id="ACGRYNS"/>
<dbReference type="Proteomes" id="UP000007015">
    <property type="component" value="Chromosome 4"/>
</dbReference>
<dbReference type="GO" id="GO:0000326">
    <property type="term" value="C:protein storage vacuole"/>
    <property type="evidence" value="ECO:0000250"/>
    <property type="project" value="UniProtKB"/>
</dbReference>
<dbReference type="GO" id="GO:0004197">
    <property type="term" value="F:cysteine-type endopeptidase activity"/>
    <property type="evidence" value="ECO:0000250"/>
    <property type="project" value="UniProtKB"/>
</dbReference>
<dbReference type="GO" id="GO:1990019">
    <property type="term" value="P:protein storage vacuole organization"/>
    <property type="evidence" value="ECO:0000250"/>
    <property type="project" value="UniProtKB"/>
</dbReference>
<dbReference type="GO" id="GO:0051603">
    <property type="term" value="P:proteolysis involved in protein catabolic process"/>
    <property type="evidence" value="ECO:0007669"/>
    <property type="project" value="InterPro"/>
</dbReference>
<dbReference type="GO" id="GO:0006624">
    <property type="term" value="P:vacuolar protein processing"/>
    <property type="evidence" value="ECO:0000250"/>
    <property type="project" value="UniProtKB"/>
</dbReference>
<dbReference type="CDD" id="cd21115">
    <property type="entry name" value="legumain_C"/>
    <property type="match status" value="1"/>
</dbReference>
<dbReference type="FunFam" id="1.10.132.130:FF:000001">
    <property type="entry name" value="Vacuolar-processing enzyme beta-isozyme"/>
    <property type="match status" value="1"/>
</dbReference>
<dbReference type="FunFam" id="3.40.50.1460:FF:000005">
    <property type="entry name" value="Vacuolar-processing enzyme beta-isozyme"/>
    <property type="match status" value="1"/>
</dbReference>
<dbReference type="Gene3D" id="1.10.132.130">
    <property type="match status" value="1"/>
</dbReference>
<dbReference type="Gene3D" id="3.40.50.1460">
    <property type="match status" value="1"/>
</dbReference>
<dbReference type="InterPro" id="IPR043577">
    <property type="entry name" value="AE"/>
</dbReference>
<dbReference type="InterPro" id="IPR048501">
    <property type="entry name" value="Legum_prodom"/>
</dbReference>
<dbReference type="InterPro" id="IPR046427">
    <property type="entry name" value="Legumain_prodom_sf"/>
</dbReference>
<dbReference type="InterPro" id="IPR001096">
    <property type="entry name" value="Peptidase_C13"/>
</dbReference>
<dbReference type="PANTHER" id="PTHR12000">
    <property type="entry name" value="HEMOGLOBINASE FAMILY MEMBER"/>
    <property type="match status" value="1"/>
</dbReference>
<dbReference type="PANTHER" id="PTHR12000:SF25">
    <property type="entry name" value="VACUOLAR-PROCESSING ENZYME BETA-ISOZYME 1"/>
    <property type="match status" value="1"/>
</dbReference>
<dbReference type="Pfam" id="PF20985">
    <property type="entry name" value="Legum_prodom"/>
    <property type="match status" value="1"/>
</dbReference>
<dbReference type="Pfam" id="PF01650">
    <property type="entry name" value="Peptidase_C13"/>
    <property type="match status" value="1"/>
</dbReference>
<dbReference type="PIRSF" id="PIRSF500139">
    <property type="entry name" value="AE"/>
    <property type="match status" value="1"/>
</dbReference>
<dbReference type="PIRSF" id="PIRSF019663">
    <property type="entry name" value="Legumain"/>
    <property type="match status" value="1"/>
</dbReference>
<dbReference type="PRINTS" id="PR00776">
    <property type="entry name" value="HEMOGLOBNASE"/>
</dbReference>
<organism evidence="8">
    <name type="scientific">Oryza sativa subsp. indica</name>
    <name type="common">Rice</name>
    <dbReference type="NCBI Taxonomy" id="39946"/>
    <lineage>
        <taxon>Eukaryota</taxon>
        <taxon>Viridiplantae</taxon>
        <taxon>Streptophyta</taxon>
        <taxon>Embryophyta</taxon>
        <taxon>Tracheophyta</taxon>
        <taxon>Spermatophyta</taxon>
        <taxon>Magnoliopsida</taxon>
        <taxon>Liliopsida</taxon>
        <taxon>Poales</taxon>
        <taxon>Poaceae</taxon>
        <taxon>BOP clade</taxon>
        <taxon>Oryzoideae</taxon>
        <taxon>Oryzeae</taxon>
        <taxon>Oryzinae</taxon>
        <taxon>Oryza</taxon>
        <taxon>Oryza sativa</taxon>
    </lineage>
</organism>
<evidence type="ECO:0000250" key="1">
    <source>
        <dbReference type="UniProtKB" id="O89017"/>
    </source>
</evidence>
<evidence type="ECO:0000250" key="2">
    <source>
        <dbReference type="UniProtKB" id="P49043"/>
    </source>
</evidence>
<evidence type="ECO:0000250" key="3">
    <source>
        <dbReference type="UniProtKB" id="P49046"/>
    </source>
</evidence>
<evidence type="ECO:0000250" key="4">
    <source>
        <dbReference type="UniProtKB" id="Q84LM2"/>
    </source>
</evidence>
<evidence type="ECO:0000255" key="5"/>
<evidence type="ECO:0000255" key="6">
    <source>
        <dbReference type="PROSITE-ProRule" id="PRU00498"/>
    </source>
</evidence>
<evidence type="ECO:0000305" key="7"/>
<evidence type="ECO:0000312" key="8">
    <source>
        <dbReference type="EMBL" id="EEC77714.1"/>
    </source>
</evidence>
<accession>B8ASK4</accession>